<protein>
    <recommendedName>
        <fullName evidence="1">Trp operon repressor homolog</fullName>
    </recommendedName>
</protein>
<organism>
    <name type="scientific">Vibrio vulnificus (strain CMCP6)</name>
    <dbReference type="NCBI Taxonomy" id="216895"/>
    <lineage>
        <taxon>Bacteria</taxon>
        <taxon>Pseudomonadati</taxon>
        <taxon>Pseudomonadota</taxon>
        <taxon>Gammaproteobacteria</taxon>
        <taxon>Vibrionales</taxon>
        <taxon>Vibrionaceae</taxon>
        <taxon>Vibrio</taxon>
    </lineage>
</organism>
<proteinExistence type="inferred from homology"/>
<keyword id="KW-0963">Cytoplasm</keyword>
<keyword id="KW-0238">DNA-binding</keyword>
<keyword id="KW-0678">Repressor</keyword>
<keyword id="KW-0804">Transcription</keyword>
<keyword id="KW-0805">Transcription regulation</keyword>
<accession>Q8DEU5</accession>
<comment type="function">
    <text evidence="1">This protein is an aporepressor. When complexed with L-tryptophan it binds the operator region of the trp operon and prevents the initiation of transcription.</text>
</comment>
<comment type="subunit">
    <text evidence="1">Homodimer.</text>
</comment>
<comment type="subcellular location">
    <subcellularLocation>
        <location evidence="1">Cytoplasm</location>
    </subcellularLocation>
</comment>
<comment type="similarity">
    <text evidence="1">Belongs to the TrpR family.</text>
</comment>
<dbReference type="EMBL" id="AE016795">
    <property type="protein sequence ID" value="AAO09008.1"/>
    <property type="molecule type" value="Genomic_DNA"/>
</dbReference>
<dbReference type="RefSeq" id="WP_011078578.1">
    <property type="nucleotide sequence ID" value="NC_004459.3"/>
</dbReference>
<dbReference type="SMR" id="Q8DEU5"/>
<dbReference type="GeneID" id="93894786"/>
<dbReference type="KEGG" id="vvu:VV1_0489"/>
<dbReference type="HOGENOM" id="CLU_147939_0_0_6"/>
<dbReference type="Proteomes" id="UP000002275">
    <property type="component" value="Chromosome 1"/>
</dbReference>
<dbReference type="GO" id="GO:0005737">
    <property type="term" value="C:cytoplasm"/>
    <property type="evidence" value="ECO:0007669"/>
    <property type="project" value="UniProtKB-SubCell"/>
</dbReference>
<dbReference type="GO" id="GO:0003700">
    <property type="term" value="F:DNA-binding transcription factor activity"/>
    <property type="evidence" value="ECO:0007669"/>
    <property type="project" value="InterPro"/>
</dbReference>
<dbReference type="GO" id="GO:0043565">
    <property type="term" value="F:sequence-specific DNA binding"/>
    <property type="evidence" value="ECO:0007669"/>
    <property type="project" value="InterPro"/>
</dbReference>
<dbReference type="GO" id="GO:0045892">
    <property type="term" value="P:negative regulation of DNA-templated transcription"/>
    <property type="evidence" value="ECO:0007669"/>
    <property type="project" value="UniProtKB-UniRule"/>
</dbReference>
<dbReference type="Gene3D" id="1.10.1270.10">
    <property type="entry name" value="TrpR-like"/>
    <property type="match status" value="1"/>
</dbReference>
<dbReference type="HAMAP" id="MF_00475">
    <property type="entry name" value="Trp_repressor"/>
    <property type="match status" value="1"/>
</dbReference>
<dbReference type="InterPro" id="IPR000831">
    <property type="entry name" value="Trp_repress"/>
</dbReference>
<dbReference type="InterPro" id="IPR013335">
    <property type="entry name" value="Trp_repress_bac"/>
</dbReference>
<dbReference type="InterPro" id="IPR010921">
    <property type="entry name" value="Trp_repressor/repl_initiator"/>
</dbReference>
<dbReference type="InterPro" id="IPR038116">
    <property type="entry name" value="TrpR-like_sf"/>
</dbReference>
<dbReference type="NCBIfam" id="TIGR01321">
    <property type="entry name" value="TrpR"/>
    <property type="match status" value="1"/>
</dbReference>
<dbReference type="PANTHER" id="PTHR38025">
    <property type="entry name" value="TRP OPERON REPRESSOR"/>
    <property type="match status" value="1"/>
</dbReference>
<dbReference type="PANTHER" id="PTHR38025:SF1">
    <property type="entry name" value="TRP OPERON REPRESSOR"/>
    <property type="match status" value="1"/>
</dbReference>
<dbReference type="Pfam" id="PF01371">
    <property type="entry name" value="Trp_repressor"/>
    <property type="match status" value="1"/>
</dbReference>
<dbReference type="PIRSF" id="PIRSF003196">
    <property type="entry name" value="Trp_repressor"/>
    <property type="match status" value="1"/>
</dbReference>
<dbReference type="SUPFAM" id="SSF48295">
    <property type="entry name" value="TrpR-like"/>
    <property type="match status" value="1"/>
</dbReference>
<name>TRPR_VIBVU</name>
<reference key="1">
    <citation type="submission" date="2002-12" db="EMBL/GenBank/DDBJ databases">
        <title>Complete genome sequence of Vibrio vulnificus CMCP6.</title>
        <authorList>
            <person name="Rhee J.H."/>
            <person name="Kim S.Y."/>
            <person name="Chung S.S."/>
            <person name="Kim J.J."/>
            <person name="Moon Y.H."/>
            <person name="Jeong H."/>
            <person name="Choy H.E."/>
        </authorList>
    </citation>
    <scope>NUCLEOTIDE SEQUENCE [LARGE SCALE GENOMIC DNA]</scope>
    <source>
        <strain>CMCP6</strain>
    </source>
</reference>
<evidence type="ECO:0000255" key="1">
    <source>
        <dbReference type="HAMAP-Rule" id="MF_00475"/>
    </source>
</evidence>
<feature type="chain" id="PRO_0000196516" description="Trp operon repressor homolog">
    <location>
        <begin position="1"/>
        <end position="102"/>
    </location>
</feature>
<feature type="DNA-binding region" evidence="1">
    <location>
        <begin position="59"/>
        <end position="82"/>
    </location>
</feature>
<gene>
    <name evidence="1" type="primary">trpR</name>
    <name type="ordered locus">VV1_0489</name>
</gene>
<sequence length="102" mass="11603">MSQQPEYTDWQQIVDLVKHSVEQKQHDMLLTMLMTPDEREALVSRVNIVRELLKGELSQRQISQMLGVGIATITRGSNELKLKSDEDKARLNQLLEGTKKGG</sequence>